<name>MMS22_CHICK</name>
<gene>
    <name type="primary">MMS22L</name>
</gene>
<accession>E1C2Z0</accession>
<comment type="function">
    <text evidence="1">Component of the MMS22L-TONSL complex, a complex that promotes homologous recombination-mediated repair of double-strand breaks (DSBs) at stalled or collapsed replication forks. The MMS22L-TONSL complex is required to maintain genome integrity during DNA replication. It mediates the assembly of RAD51 filaments on single-stranded DNA (ssDNA): the MMS22L-TONSL complex is recruited to DSBs following histone replacement by histone chaperones and eviction of the replication protein A complex (RPA/RP-A) from DSBs. Following recruitment to DSBs, the TONSL-MMS22L complex promotes recruitment of RAD51 filaments and subsequent homologous recombination. Within the complex, MMS22L acts by binding ssDNA.</text>
</comment>
<comment type="subunit">
    <text evidence="1">Component of the MMS22L-TONSL complex.</text>
</comment>
<comment type="subcellular location">
    <subcellularLocation>
        <location evidence="1">Nucleus</location>
    </subcellularLocation>
    <subcellularLocation>
        <location evidence="1">Chromosome</location>
    </subcellularLocation>
    <text evidence="1">Localizes to DNA damage sites, accumulates at stressed replication forks.</text>
</comment>
<comment type="similarity">
    <text evidence="2">Belongs to the MMS22 family. MMS22L subfamily.</text>
</comment>
<protein>
    <recommendedName>
        <fullName>Protein MMS22-like</fullName>
    </recommendedName>
    <alternativeName>
        <fullName>Methyl methanesulfonate-sensitivity protein 22-like</fullName>
    </alternativeName>
</protein>
<evidence type="ECO:0000250" key="1">
    <source>
        <dbReference type="UniProtKB" id="Q6ZRQ5"/>
    </source>
</evidence>
<evidence type="ECO:0000305" key="2"/>
<keyword id="KW-0156">Chromatin regulator</keyword>
<keyword id="KW-0158">Chromosome</keyword>
<keyword id="KW-0227">DNA damage</keyword>
<keyword id="KW-0234">DNA repair</keyword>
<keyword id="KW-0238">DNA-binding</keyword>
<keyword id="KW-0539">Nucleus</keyword>
<keyword id="KW-1185">Reference proteome</keyword>
<organism>
    <name type="scientific">Gallus gallus</name>
    <name type="common">Chicken</name>
    <dbReference type="NCBI Taxonomy" id="9031"/>
    <lineage>
        <taxon>Eukaryota</taxon>
        <taxon>Metazoa</taxon>
        <taxon>Chordata</taxon>
        <taxon>Craniata</taxon>
        <taxon>Vertebrata</taxon>
        <taxon>Euteleostomi</taxon>
        <taxon>Archelosauria</taxon>
        <taxon>Archosauria</taxon>
        <taxon>Dinosauria</taxon>
        <taxon>Saurischia</taxon>
        <taxon>Theropoda</taxon>
        <taxon>Coelurosauria</taxon>
        <taxon>Aves</taxon>
        <taxon>Neognathae</taxon>
        <taxon>Galloanserae</taxon>
        <taxon>Galliformes</taxon>
        <taxon>Phasianidae</taxon>
        <taxon>Phasianinae</taxon>
        <taxon>Gallus</taxon>
    </lineage>
</organism>
<dbReference type="EMBL" id="AADN02002275">
    <property type="status" value="NOT_ANNOTATED_CDS"/>
    <property type="molecule type" value="Genomic_DNA"/>
</dbReference>
<dbReference type="FunCoup" id="E1C2Z0">
    <property type="interactions" value="1419"/>
</dbReference>
<dbReference type="STRING" id="9031.ENSGALP00000024966"/>
<dbReference type="PaxDb" id="9031-ENSGALP00000024966"/>
<dbReference type="VEuPathDB" id="HostDB:geneid_421799"/>
<dbReference type="eggNOG" id="ENOG502QQCR">
    <property type="taxonomic scope" value="Eukaryota"/>
</dbReference>
<dbReference type="InParanoid" id="E1C2Z0"/>
<dbReference type="OrthoDB" id="8193282at2759"/>
<dbReference type="PhylomeDB" id="E1C2Z0"/>
<dbReference type="TreeFam" id="TF353832"/>
<dbReference type="Proteomes" id="UP000000539">
    <property type="component" value="Unassembled WGS sequence"/>
</dbReference>
<dbReference type="GO" id="GO:0043596">
    <property type="term" value="C:nuclear replication fork"/>
    <property type="evidence" value="ECO:0000250"/>
    <property type="project" value="UniProtKB"/>
</dbReference>
<dbReference type="GO" id="GO:0090734">
    <property type="term" value="C:site of DNA damage"/>
    <property type="evidence" value="ECO:0000250"/>
    <property type="project" value="UniProtKB"/>
</dbReference>
<dbReference type="GO" id="GO:0003697">
    <property type="term" value="F:single-stranded DNA binding"/>
    <property type="evidence" value="ECO:0000250"/>
    <property type="project" value="UniProtKB"/>
</dbReference>
<dbReference type="GO" id="GO:0006325">
    <property type="term" value="P:chromatin organization"/>
    <property type="evidence" value="ECO:0007669"/>
    <property type="project" value="UniProtKB-KW"/>
</dbReference>
<dbReference type="GO" id="GO:0000724">
    <property type="term" value="P:double-strand break repair via homologous recombination"/>
    <property type="evidence" value="ECO:0000250"/>
    <property type="project" value="UniProtKB"/>
</dbReference>
<dbReference type="GO" id="GO:0031297">
    <property type="term" value="P:replication fork processing"/>
    <property type="evidence" value="ECO:0000250"/>
    <property type="project" value="UniProtKB"/>
</dbReference>
<dbReference type="InterPro" id="IPR042320">
    <property type="entry name" value="MMS22-like"/>
</dbReference>
<dbReference type="InterPro" id="IPR029424">
    <property type="entry name" value="MMS22L_C"/>
</dbReference>
<dbReference type="InterPro" id="IPR029425">
    <property type="entry name" value="MMS22L_N"/>
</dbReference>
<dbReference type="PANTHER" id="PTHR28547">
    <property type="entry name" value="PROTEIN MMS22-LIKE"/>
    <property type="match status" value="1"/>
</dbReference>
<dbReference type="PANTHER" id="PTHR28547:SF1">
    <property type="entry name" value="PROTEIN MMS22-LIKE"/>
    <property type="match status" value="1"/>
</dbReference>
<dbReference type="Pfam" id="PF14911">
    <property type="entry name" value="MMS22L_C"/>
    <property type="match status" value="1"/>
</dbReference>
<dbReference type="Pfam" id="PF14910">
    <property type="entry name" value="MMS22L_N"/>
    <property type="match status" value="1"/>
</dbReference>
<feature type="chain" id="PRO_0000403773" description="Protein MMS22-like">
    <location>
        <begin position="1"/>
        <end position="1243"/>
    </location>
</feature>
<proteinExistence type="inferred from homology"/>
<reference key="1">
    <citation type="journal article" date="2004" name="Nature">
        <title>Sequence and comparative analysis of the chicken genome provide unique perspectives on vertebrate evolution.</title>
        <authorList>
            <person name="Hillier L.W."/>
            <person name="Miller W."/>
            <person name="Birney E."/>
            <person name="Warren W."/>
            <person name="Hardison R.C."/>
            <person name="Ponting C.P."/>
            <person name="Bork P."/>
            <person name="Burt D.W."/>
            <person name="Groenen M.A.M."/>
            <person name="Delany M.E."/>
            <person name="Dodgson J.B."/>
            <person name="Chinwalla A.T."/>
            <person name="Cliften P.F."/>
            <person name="Clifton S.W."/>
            <person name="Delehaunty K.D."/>
            <person name="Fronick C."/>
            <person name="Fulton R.S."/>
            <person name="Graves T.A."/>
            <person name="Kremitzki C."/>
            <person name="Layman D."/>
            <person name="Magrini V."/>
            <person name="McPherson J.D."/>
            <person name="Miner T.L."/>
            <person name="Minx P."/>
            <person name="Nash W.E."/>
            <person name="Nhan M.N."/>
            <person name="Nelson J.O."/>
            <person name="Oddy L.G."/>
            <person name="Pohl C.S."/>
            <person name="Randall-Maher J."/>
            <person name="Smith S.M."/>
            <person name="Wallis J.W."/>
            <person name="Yang S.-P."/>
            <person name="Romanov M.N."/>
            <person name="Rondelli C.M."/>
            <person name="Paton B."/>
            <person name="Smith J."/>
            <person name="Morrice D."/>
            <person name="Daniels L."/>
            <person name="Tempest H.G."/>
            <person name="Robertson L."/>
            <person name="Masabanda J.S."/>
            <person name="Griffin D.K."/>
            <person name="Vignal A."/>
            <person name="Fillon V."/>
            <person name="Jacobbson L."/>
            <person name="Kerje S."/>
            <person name="Andersson L."/>
            <person name="Crooijmans R.P."/>
            <person name="Aerts J."/>
            <person name="van der Poel J.J."/>
            <person name="Ellegren H."/>
            <person name="Caldwell R.B."/>
            <person name="Hubbard S.J."/>
            <person name="Grafham D.V."/>
            <person name="Kierzek A.M."/>
            <person name="McLaren S.R."/>
            <person name="Overton I.M."/>
            <person name="Arakawa H."/>
            <person name="Beattie K.J."/>
            <person name="Bezzubov Y."/>
            <person name="Boardman P.E."/>
            <person name="Bonfield J.K."/>
            <person name="Croning M.D.R."/>
            <person name="Davies R.M."/>
            <person name="Francis M.D."/>
            <person name="Humphray S.J."/>
            <person name="Scott C.E."/>
            <person name="Taylor R.G."/>
            <person name="Tickle C."/>
            <person name="Brown W.R.A."/>
            <person name="Rogers J."/>
            <person name="Buerstedde J.-M."/>
            <person name="Wilson S.A."/>
            <person name="Stubbs L."/>
            <person name="Ovcharenko I."/>
            <person name="Gordon L."/>
            <person name="Lucas S."/>
            <person name="Miller M.M."/>
            <person name="Inoko H."/>
            <person name="Shiina T."/>
            <person name="Kaufman J."/>
            <person name="Salomonsen J."/>
            <person name="Skjoedt K."/>
            <person name="Wong G.K.-S."/>
            <person name="Wang J."/>
            <person name="Liu B."/>
            <person name="Wang J."/>
            <person name="Yu J."/>
            <person name="Yang H."/>
            <person name="Nefedov M."/>
            <person name="Koriabine M."/>
            <person name="Dejong P.J."/>
            <person name="Goodstadt L."/>
            <person name="Webber C."/>
            <person name="Dickens N.J."/>
            <person name="Letunic I."/>
            <person name="Suyama M."/>
            <person name="Torrents D."/>
            <person name="von Mering C."/>
            <person name="Zdobnov E.M."/>
            <person name="Makova K."/>
            <person name="Nekrutenko A."/>
            <person name="Elnitski L."/>
            <person name="Eswara P."/>
            <person name="King D.C."/>
            <person name="Yang S.-P."/>
            <person name="Tyekucheva S."/>
            <person name="Radakrishnan A."/>
            <person name="Harris R.S."/>
            <person name="Chiaromonte F."/>
            <person name="Taylor J."/>
            <person name="He J."/>
            <person name="Rijnkels M."/>
            <person name="Griffiths-Jones S."/>
            <person name="Ureta-Vidal A."/>
            <person name="Hoffman M.M."/>
            <person name="Severin J."/>
            <person name="Searle S.M.J."/>
            <person name="Law A.S."/>
            <person name="Speed D."/>
            <person name="Waddington D."/>
            <person name="Cheng Z."/>
            <person name="Tuzun E."/>
            <person name="Eichler E."/>
            <person name="Bao Z."/>
            <person name="Flicek P."/>
            <person name="Shteynberg D.D."/>
            <person name="Brent M.R."/>
            <person name="Bye J.M."/>
            <person name="Huckle E.J."/>
            <person name="Chatterji S."/>
            <person name="Dewey C."/>
            <person name="Pachter L."/>
            <person name="Kouranov A."/>
            <person name="Mourelatos Z."/>
            <person name="Hatzigeorgiou A.G."/>
            <person name="Paterson A.H."/>
            <person name="Ivarie R."/>
            <person name="Brandstrom M."/>
            <person name="Axelsson E."/>
            <person name="Backstrom N."/>
            <person name="Berlin S."/>
            <person name="Webster M.T."/>
            <person name="Pourquie O."/>
            <person name="Reymond A."/>
            <person name="Ucla C."/>
            <person name="Antonarakis S.E."/>
            <person name="Long M."/>
            <person name="Emerson J.J."/>
            <person name="Betran E."/>
            <person name="Dupanloup I."/>
            <person name="Kaessmann H."/>
            <person name="Hinrichs A.S."/>
            <person name="Bejerano G."/>
            <person name="Furey T.S."/>
            <person name="Harte R.A."/>
            <person name="Raney B."/>
            <person name="Siepel A."/>
            <person name="Kent W.J."/>
            <person name="Haussler D."/>
            <person name="Eyras E."/>
            <person name="Castelo R."/>
            <person name="Abril J.F."/>
            <person name="Castellano S."/>
            <person name="Camara F."/>
            <person name="Parra G."/>
            <person name="Guigo R."/>
            <person name="Bourque G."/>
            <person name="Tesler G."/>
            <person name="Pevzner P.A."/>
            <person name="Smit A."/>
            <person name="Fulton L.A."/>
            <person name="Mardis E.R."/>
            <person name="Wilson R.K."/>
        </authorList>
    </citation>
    <scope>NUCLEOTIDE SEQUENCE [LARGE SCALE GENOMIC DNA]</scope>
</reference>
<sequence>MDSFTPPLLSDSLQMAMEVENEKSNPPCFSCIFDNQNGGRSFSGESYLASGSLKRVLLRLDPSPNDYEEDAIEMFGFQWVTETALVESCGLLFGLLRQQIYKLEDLIEMNSSDFGKAANLHSEAENIRRLCINFLHYVKVFIFRYLEPPKTENDGVLHPYEELEAQFPSLLVEELHSLTLHIGHLCELPSNVLAAFTIQHQAKIFPPSWHLLHLHLDIHWLVLEILHVLSEKMMRQVVYANHFINLTGENLTNISLFETHCENLISDLISLSIQKYTKVRPSEALTSHHYPCNCIKELWILLIQLLGFRNKGSQTECFWSLVNKKLKSIFERPTSSESVSVFGTTQCKDPLSFSLWIVTHLASLYQFDRNGNLEEKKQKESNWKFVEELLKNSIGAQTGVLEEHLRMHLQCCLTLCRFWDWNLSVITILWDYYSKNLNSCFTVPWLGLKGLASISKTSLSMLELVKSCCCEQQIPTLYKSSNSYLIFLSILARMMKEEAESSGVHPWKQIKGRIYSKFHRKRMQELTEVGLQNFFNLFLLLAIVAETEDIVSRVLDLLDFLTPSLVSPSQRALIWRGHFAFLLIYVEKNMDISVLAEKLSNAFRVKAKEFLVTKNDYTQKQNLWTLISTYIDGVQEVFETSCYLSLSEEKLLNDGFTMLLPACRGAELSMVLNFLQVVIARLRSVHKRVSQGLQPGNADSNAQLPLVAKEHHLAVASALWRNFFPYLKSQRMSQTPPSPQLADTAAGFALLALDIPSKALSDLQPQPVLSMMQLFGWDDMVWPHLVSRYLSHLIQNSALCEAFSTMGYTSYEALTVRSWFRCVLQMFIDQPSGTLAKTDAERTVGKAYMEQLTEMTRLIFKLKEVESILSKARVEEPVLKQDPKNALVQFIKAVGRTYSGLQTLPEKSAMVLKALEYLGDVLKYVKPYLKAKGPPEGLQLAYWIIGCLVKFWAPILATSKAQQLLFRIIDCLLLPHSVLQQDKELPGALLSAIQESLHLYLQGLSFICCQSQARGAYLNQLLGSIVQQYFGRFLPPSPTALGAGQHPMLTALCSSITVPQALRLRKTTLHVINEHYMQFKGSAPPPRLASVLAFILEVLQRTQASELCDVELVLPAVLKCMVLVNELQVKKISTVIVQYMVQGCQARSGGEHATQLTSVFRQFIQDYTAVYDHRVFSILETVAVLDQTLVTSLIPTLTQSLKDSEYKQGLGRNAAQREAYKRLLTHLSEAGQNEIQKLENEAG</sequence>